<gene>
    <name type="ordered locus">AtMg00870</name>
</gene>
<accession>P92525</accession>
<accession>Q1ZXY7</accession>
<sequence length="184" mass="21143">MVSSSRIARSFTRYTSALQRHTIVTKIKQKFPCPRSRTQGQSRRSETHTISRRRSCRAIARSNLGRVSSVTLPWFSCPSPAVVALAKKPFRTARSSCPRSRKSSRCRKSLLSWTAHHLLDEFPKRRIWVFLSFRIGGSLHRRHAMEKNICSTRARIRLISAISLLSKPIVEIVVGYPQSEDRRL</sequence>
<name>M870_ARATH</name>
<proteinExistence type="evidence at transcript level"/>
<keyword id="KW-0496">Mitochondrion</keyword>
<keyword id="KW-1185">Reference proteome</keyword>
<feature type="chain" id="PRO_0000196797" description="Uncharacterized mitochondrial protein AtMg00870">
    <location>
        <begin position="1"/>
        <end position="184"/>
    </location>
</feature>
<feature type="region of interest" description="Disordered" evidence="1">
    <location>
        <begin position="32"/>
        <end position="52"/>
    </location>
</feature>
<evidence type="ECO:0000256" key="1">
    <source>
        <dbReference type="SAM" id="MobiDB-lite"/>
    </source>
</evidence>
<evidence type="ECO:0000305" key="2"/>
<protein>
    <recommendedName>
        <fullName>Uncharacterized mitochondrial protein AtMg00870</fullName>
    </recommendedName>
    <alternativeName>
        <fullName>ORF184</fullName>
    </alternativeName>
</protein>
<geneLocation type="mitochondrion"/>
<organism>
    <name type="scientific">Arabidopsis thaliana</name>
    <name type="common">Mouse-ear cress</name>
    <dbReference type="NCBI Taxonomy" id="3702"/>
    <lineage>
        <taxon>Eukaryota</taxon>
        <taxon>Viridiplantae</taxon>
        <taxon>Streptophyta</taxon>
        <taxon>Embryophyta</taxon>
        <taxon>Tracheophyta</taxon>
        <taxon>Spermatophyta</taxon>
        <taxon>Magnoliopsida</taxon>
        <taxon>eudicotyledons</taxon>
        <taxon>Gunneridae</taxon>
        <taxon>Pentapetalae</taxon>
        <taxon>rosids</taxon>
        <taxon>malvids</taxon>
        <taxon>Brassicales</taxon>
        <taxon>Brassicaceae</taxon>
        <taxon>Camelineae</taxon>
        <taxon>Arabidopsis</taxon>
    </lineage>
</organism>
<reference key="1">
    <citation type="journal article" date="1997" name="Nat. Genet.">
        <title>The mitochondrial genome of Arabidopsis thaliana contains 57 genes in 366,924 nucleotides.</title>
        <authorList>
            <person name="Unseld M."/>
            <person name="Marienfeld J.R."/>
            <person name="Brandt P."/>
            <person name="Brennicke A."/>
        </authorList>
    </citation>
    <scope>NUCLEOTIDE SEQUENCE [LARGE SCALE GENOMIC DNA]</scope>
    <source>
        <strain>cv. C24</strain>
    </source>
</reference>
<reference key="2">
    <citation type="journal article" date="2018" name="Plant Cell">
        <title>Correction of persistent errors in Arabidopsis reference mitochondrial genomes.</title>
        <authorList>
            <person name="Sloan D.B."/>
            <person name="Wu Z."/>
            <person name="Sharbrough J."/>
        </authorList>
    </citation>
    <scope>NUCLEOTIDE SEQUENCE [LARGE SCALE GENOMIC DNA]</scope>
    <source>
        <strain>cv. Columbia</strain>
    </source>
</reference>
<reference key="3">
    <citation type="journal article" date="1999" name="Nature">
        <title>Sequence and analysis of chromosome 2 of the plant Arabidopsis thaliana.</title>
        <authorList>
            <person name="Lin X."/>
            <person name="Kaul S."/>
            <person name="Rounsley S.D."/>
            <person name="Shea T.P."/>
            <person name="Benito M.-I."/>
            <person name="Town C.D."/>
            <person name="Fujii C.Y."/>
            <person name="Mason T.M."/>
            <person name="Bowman C.L."/>
            <person name="Barnstead M.E."/>
            <person name="Feldblyum T.V."/>
            <person name="Buell C.R."/>
            <person name="Ketchum K.A."/>
            <person name="Lee J.J."/>
            <person name="Ronning C.M."/>
            <person name="Koo H.L."/>
            <person name="Moffat K.S."/>
            <person name="Cronin L.A."/>
            <person name="Shen M."/>
            <person name="Pai G."/>
            <person name="Van Aken S."/>
            <person name="Umayam L."/>
            <person name="Tallon L.J."/>
            <person name="Gill J.E."/>
            <person name="Adams M.D."/>
            <person name="Carrera A.J."/>
            <person name="Creasy T.H."/>
            <person name="Goodman H.M."/>
            <person name="Somerville C.R."/>
            <person name="Copenhaver G.P."/>
            <person name="Preuss D."/>
            <person name="Nierman W.C."/>
            <person name="White O."/>
            <person name="Eisen J.A."/>
            <person name="Salzberg S.L."/>
            <person name="Fraser C.M."/>
            <person name="Venter J.C."/>
        </authorList>
    </citation>
    <scope>NUCLEOTIDE SEQUENCE [LARGE SCALE GENOMIC DNA] (AT2G07682)</scope>
    <source>
        <strain>cv. Columbia</strain>
    </source>
</reference>
<reference key="4">
    <citation type="journal article" date="2005" name="Plant Physiol.">
        <title>Analysis of the cDNAs of hypothetical genes on Arabidopsis chromosome 2 reveals numerous transcript variants.</title>
        <authorList>
            <person name="Xiao Y.-L."/>
            <person name="Smith S.R."/>
            <person name="Ishmael N."/>
            <person name="Redman J.C."/>
            <person name="Kumar N."/>
            <person name="Monaghan E.L."/>
            <person name="Ayele M."/>
            <person name="Haas B.J."/>
            <person name="Wu H.C."/>
            <person name="Town C.D."/>
        </authorList>
    </citation>
    <scope>NUCLEOTIDE SEQUENCE [LARGE SCALE MRNA] (AT2G07682)</scope>
    <source>
        <strain>cv. Columbia</strain>
    </source>
</reference>
<dbReference type="EMBL" id="Y08501">
    <property type="protein sequence ID" value="CAA69830.1"/>
    <property type="molecule type" value="Genomic_DNA"/>
</dbReference>
<dbReference type="EMBL" id="BK010421">
    <property type="status" value="NOT_ANNOTATED_CDS"/>
    <property type="molecule type" value="Genomic_DNA"/>
</dbReference>
<dbReference type="EMBL" id="AC007143">
    <property type="status" value="NOT_ANNOTATED_CDS"/>
    <property type="molecule type" value="Genomic_DNA"/>
</dbReference>
<dbReference type="EMBL" id="AC007730">
    <property type="status" value="NOT_ANNOTATED_CDS"/>
    <property type="molecule type" value="Genomic_DNA"/>
</dbReference>
<dbReference type="EMBL" id="AY168992">
    <property type="status" value="NOT_ANNOTATED_CDS"/>
    <property type="molecule type" value="mRNA"/>
</dbReference>
<dbReference type="RefSeq" id="NP_085543.1">
    <property type="nucleotide sequence ID" value="NC_001284.2"/>
</dbReference>
<dbReference type="IntAct" id="P92525">
    <property type="interactions" value="6"/>
</dbReference>
<dbReference type="STRING" id="3702.P92525"/>
<dbReference type="PaxDb" id="3702-ATMG00870.1"/>
<dbReference type="EnsemblPlants" id="ATMG00870.1">
    <property type="protein sequence ID" value="ATMG00870.1"/>
    <property type="gene ID" value="ATMG00870"/>
</dbReference>
<dbReference type="Gramene" id="ATMG00870.1">
    <property type="protein sequence ID" value="ATMG00870.1"/>
    <property type="gene ID" value="ATMG00870"/>
</dbReference>
<dbReference type="Araport" id="ATMG00870"/>
<dbReference type="TAIR" id="ATMG00870">
    <property type="gene designation" value="ORF184"/>
</dbReference>
<dbReference type="HOGENOM" id="CLU_1470155_0_0_1"/>
<dbReference type="InParanoid" id="P92525"/>
<dbReference type="PRO" id="PR:P92525"/>
<dbReference type="Proteomes" id="UP000006548">
    <property type="component" value="Mitochondrion MT"/>
</dbReference>
<dbReference type="GO" id="GO:0005739">
    <property type="term" value="C:mitochondrion"/>
    <property type="evidence" value="ECO:0007669"/>
    <property type="project" value="UniProtKB-SubCell"/>
</dbReference>
<comment type="subcellular location">
    <subcellularLocation>
        <location evidence="2">Mitochondrion</location>
    </subcellularLocation>
</comment>
<comment type="miscellaneous">
    <text>A stretch of 270 kb of the mitochondrial genome is duplicated within the centromere of chromosome 2 resulting in the duplication of the gene. The expression of this duplicated gene (At2g07682) is demonstrated.</text>
</comment>